<gene>
    <name evidence="1" type="primary">aspS</name>
    <name type="ordered locus">M28_Spy1822</name>
</gene>
<feature type="chain" id="PRO_0000235565" description="Aspartate--tRNA ligase">
    <location>
        <begin position="1"/>
        <end position="582"/>
    </location>
</feature>
<feature type="region of interest" description="Aspartate" evidence="1">
    <location>
        <begin position="198"/>
        <end position="201"/>
    </location>
</feature>
<feature type="binding site" evidence="1">
    <location>
        <position position="174"/>
    </location>
    <ligand>
        <name>L-aspartate</name>
        <dbReference type="ChEBI" id="CHEBI:29991"/>
    </ligand>
</feature>
<feature type="binding site" evidence="1">
    <location>
        <begin position="220"/>
        <end position="222"/>
    </location>
    <ligand>
        <name>ATP</name>
        <dbReference type="ChEBI" id="CHEBI:30616"/>
    </ligand>
</feature>
<feature type="binding site" evidence="1">
    <location>
        <position position="220"/>
    </location>
    <ligand>
        <name>L-aspartate</name>
        <dbReference type="ChEBI" id="CHEBI:29991"/>
    </ligand>
</feature>
<feature type="binding site" evidence="1">
    <location>
        <position position="229"/>
    </location>
    <ligand>
        <name>ATP</name>
        <dbReference type="ChEBI" id="CHEBI:30616"/>
    </ligand>
</feature>
<feature type="binding site" evidence="1">
    <location>
        <position position="443"/>
    </location>
    <ligand>
        <name>L-aspartate</name>
        <dbReference type="ChEBI" id="CHEBI:29991"/>
    </ligand>
</feature>
<feature type="binding site" evidence="1">
    <location>
        <position position="477"/>
    </location>
    <ligand>
        <name>ATP</name>
        <dbReference type="ChEBI" id="CHEBI:30616"/>
    </ligand>
</feature>
<feature type="binding site" evidence="1">
    <location>
        <position position="484"/>
    </location>
    <ligand>
        <name>L-aspartate</name>
        <dbReference type="ChEBI" id="CHEBI:29991"/>
    </ligand>
</feature>
<feature type="binding site" evidence="1">
    <location>
        <begin position="529"/>
        <end position="532"/>
    </location>
    <ligand>
        <name>ATP</name>
        <dbReference type="ChEBI" id="CHEBI:30616"/>
    </ligand>
</feature>
<organism>
    <name type="scientific">Streptococcus pyogenes serotype M28 (strain MGAS6180)</name>
    <dbReference type="NCBI Taxonomy" id="319701"/>
    <lineage>
        <taxon>Bacteria</taxon>
        <taxon>Bacillati</taxon>
        <taxon>Bacillota</taxon>
        <taxon>Bacilli</taxon>
        <taxon>Lactobacillales</taxon>
        <taxon>Streptococcaceae</taxon>
        <taxon>Streptococcus</taxon>
    </lineage>
</organism>
<keyword id="KW-0030">Aminoacyl-tRNA synthetase</keyword>
<keyword id="KW-0067">ATP-binding</keyword>
<keyword id="KW-0963">Cytoplasm</keyword>
<keyword id="KW-0436">Ligase</keyword>
<keyword id="KW-0547">Nucleotide-binding</keyword>
<keyword id="KW-0648">Protein biosynthesis</keyword>
<proteinExistence type="inferred from homology"/>
<evidence type="ECO:0000255" key="1">
    <source>
        <dbReference type="HAMAP-Rule" id="MF_00044"/>
    </source>
</evidence>
<evidence type="ECO:0000305" key="2"/>
<dbReference type="EC" id="6.1.1.12" evidence="1"/>
<dbReference type="EMBL" id="CP000056">
    <property type="protein sequence ID" value="AAX72932.1"/>
    <property type="status" value="ALT_INIT"/>
    <property type="molecule type" value="Genomic_DNA"/>
</dbReference>
<dbReference type="RefSeq" id="WP_021340711.1">
    <property type="nucleotide sequence ID" value="NC_007296.2"/>
</dbReference>
<dbReference type="SMR" id="Q48QS8"/>
<dbReference type="KEGG" id="spb:M28_Spy1822"/>
<dbReference type="HOGENOM" id="CLU_014330_3_2_9"/>
<dbReference type="GO" id="GO:0005737">
    <property type="term" value="C:cytoplasm"/>
    <property type="evidence" value="ECO:0007669"/>
    <property type="project" value="UniProtKB-SubCell"/>
</dbReference>
<dbReference type="GO" id="GO:0004815">
    <property type="term" value="F:aspartate-tRNA ligase activity"/>
    <property type="evidence" value="ECO:0007669"/>
    <property type="project" value="UniProtKB-UniRule"/>
</dbReference>
<dbReference type="GO" id="GO:0005524">
    <property type="term" value="F:ATP binding"/>
    <property type="evidence" value="ECO:0007669"/>
    <property type="project" value="UniProtKB-UniRule"/>
</dbReference>
<dbReference type="GO" id="GO:0140096">
    <property type="term" value="F:catalytic activity, acting on a protein"/>
    <property type="evidence" value="ECO:0007669"/>
    <property type="project" value="UniProtKB-ARBA"/>
</dbReference>
<dbReference type="GO" id="GO:0003676">
    <property type="term" value="F:nucleic acid binding"/>
    <property type="evidence" value="ECO:0007669"/>
    <property type="project" value="InterPro"/>
</dbReference>
<dbReference type="GO" id="GO:0016740">
    <property type="term" value="F:transferase activity"/>
    <property type="evidence" value="ECO:0007669"/>
    <property type="project" value="UniProtKB-ARBA"/>
</dbReference>
<dbReference type="GO" id="GO:0006422">
    <property type="term" value="P:aspartyl-tRNA aminoacylation"/>
    <property type="evidence" value="ECO:0007669"/>
    <property type="project" value="UniProtKB-UniRule"/>
</dbReference>
<dbReference type="CDD" id="cd00777">
    <property type="entry name" value="AspRS_core"/>
    <property type="match status" value="1"/>
</dbReference>
<dbReference type="CDD" id="cd04317">
    <property type="entry name" value="EcAspRS_like_N"/>
    <property type="match status" value="1"/>
</dbReference>
<dbReference type="Gene3D" id="3.30.930.10">
    <property type="entry name" value="Bira Bifunctional Protein, Domain 2"/>
    <property type="match status" value="1"/>
</dbReference>
<dbReference type="Gene3D" id="3.30.1360.30">
    <property type="entry name" value="GAD-like domain"/>
    <property type="match status" value="1"/>
</dbReference>
<dbReference type="Gene3D" id="2.40.50.140">
    <property type="entry name" value="Nucleic acid-binding proteins"/>
    <property type="match status" value="1"/>
</dbReference>
<dbReference type="HAMAP" id="MF_00044">
    <property type="entry name" value="Asp_tRNA_synth_type1"/>
    <property type="match status" value="1"/>
</dbReference>
<dbReference type="InterPro" id="IPR004364">
    <property type="entry name" value="Aa-tRNA-synt_II"/>
</dbReference>
<dbReference type="InterPro" id="IPR006195">
    <property type="entry name" value="aa-tRNA-synth_II"/>
</dbReference>
<dbReference type="InterPro" id="IPR045864">
    <property type="entry name" value="aa-tRNA-synth_II/BPL/LPL"/>
</dbReference>
<dbReference type="InterPro" id="IPR004524">
    <property type="entry name" value="Asp-tRNA-ligase_1"/>
</dbReference>
<dbReference type="InterPro" id="IPR047089">
    <property type="entry name" value="Asp-tRNA-ligase_1_N"/>
</dbReference>
<dbReference type="InterPro" id="IPR002312">
    <property type="entry name" value="Asp/Asn-tRNA-synth_IIb"/>
</dbReference>
<dbReference type="InterPro" id="IPR047090">
    <property type="entry name" value="AspRS_core"/>
</dbReference>
<dbReference type="InterPro" id="IPR004115">
    <property type="entry name" value="GAD-like_sf"/>
</dbReference>
<dbReference type="InterPro" id="IPR029351">
    <property type="entry name" value="GAD_dom"/>
</dbReference>
<dbReference type="InterPro" id="IPR012340">
    <property type="entry name" value="NA-bd_OB-fold"/>
</dbReference>
<dbReference type="InterPro" id="IPR004365">
    <property type="entry name" value="NA-bd_OB_tRNA"/>
</dbReference>
<dbReference type="NCBIfam" id="TIGR00459">
    <property type="entry name" value="aspS_bact"/>
    <property type="match status" value="1"/>
</dbReference>
<dbReference type="NCBIfam" id="NF001750">
    <property type="entry name" value="PRK00476.1"/>
    <property type="match status" value="1"/>
</dbReference>
<dbReference type="PANTHER" id="PTHR22594:SF5">
    <property type="entry name" value="ASPARTATE--TRNA LIGASE, MITOCHONDRIAL"/>
    <property type="match status" value="1"/>
</dbReference>
<dbReference type="PANTHER" id="PTHR22594">
    <property type="entry name" value="ASPARTYL/LYSYL-TRNA SYNTHETASE"/>
    <property type="match status" value="1"/>
</dbReference>
<dbReference type="Pfam" id="PF02938">
    <property type="entry name" value="GAD"/>
    <property type="match status" value="1"/>
</dbReference>
<dbReference type="Pfam" id="PF00152">
    <property type="entry name" value="tRNA-synt_2"/>
    <property type="match status" value="1"/>
</dbReference>
<dbReference type="Pfam" id="PF01336">
    <property type="entry name" value="tRNA_anti-codon"/>
    <property type="match status" value="1"/>
</dbReference>
<dbReference type="PRINTS" id="PR01042">
    <property type="entry name" value="TRNASYNTHASP"/>
</dbReference>
<dbReference type="SUPFAM" id="SSF55681">
    <property type="entry name" value="Class II aaRS and biotin synthetases"/>
    <property type="match status" value="1"/>
</dbReference>
<dbReference type="SUPFAM" id="SSF55261">
    <property type="entry name" value="GAD domain-like"/>
    <property type="match status" value="1"/>
</dbReference>
<dbReference type="SUPFAM" id="SSF50249">
    <property type="entry name" value="Nucleic acid-binding proteins"/>
    <property type="match status" value="1"/>
</dbReference>
<dbReference type="PROSITE" id="PS50862">
    <property type="entry name" value="AA_TRNA_LIGASE_II"/>
    <property type="match status" value="1"/>
</dbReference>
<sequence>MKRSMYAGRVREEHIGTTITLKGWVSRRRDLGGLIFIDLRDREGVMQLVINPEEVSSDVMATAERLRSEYVIEVEGFVEARQQANDKLATGMVELKVSALTILNTAKTTPFEIKDDVEVSDDTRLRYRYLDLRRPEMLENFKLRAKVTHSIRNYLDDLEFIDVETPMLTKSTPEGARDYLVPSRVSQGHFYALPQSPQITKQLLMNAGFDRYYQIVKCFRDEDLRGDRQPEFTQVDLETSFLSEQEIQDIVEGMIAKVMKETKEIDVTLPFPRMSYDVAMNSYGSDKPDTRFEMLLQDLTVTVNGIDFKVFSEAPAVKAIVVKGNADRYSRKDIDKLTEFAKQFGAKGLAWVKVTDGQLAGPVAKFLIAIETELSSQLKLAENDLVLFVADTLEVANNTLGALRNRIAKDLDMIDQSQFNFLWVVDWPMFEWSEEEGRYMSAHHPFTLPTPESAHELEGDLAKVRAIAYDIVLNGYELGGGSLRINQKEMQERMFKALGFTADEANDQFGFLLEAMDYGFPPHGGLAIGLDRFVMLLAGKGNIREVIAFPKNNKASDPMTQAPSLVSENQLEELSLQIESHD</sequence>
<reference key="1">
    <citation type="journal article" date="2005" name="J. Infect. Dis.">
        <title>Genome sequence of a serotype M28 strain of group A Streptococcus: potential new insights into puerperal sepsis and bacterial disease specificity.</title>
        <authorList>
            <person name="Green N.M."/>
            <person name="Zhang S."/>
            <person name="Porcella S.F."/>
            <person name="Nagiec M.J."/>
            <person name="Barbian K.D."/>
            <person name="Beres S.B."/>
            <person name="Lefebvre R.B."/>
            <person name="Musser J.M."/>
        </authorList>
    </citation>
    <scope>NUCLEOTIDE SEQUENCE [LARGE SCALE GENOMIC DNA]</scope>
    <source>
        <strain>MGAS6180</strain>
    </source>
</reference>
<name>SYD_STRPM</name>
<protein>
    <recommendedName>
        <fullName evidence="1">Aspartate--tRNA ligase</fullName>
        <ecNumber evidence="1">6.1.1.12</ecNumber>
    </recommendedName>
    <alternativeName>
        <fullName evidence="1">Aspartyl-tRNA synthetase</fullName>
        <shortName evidence="1">AspRS</shortName>
    </alternativeName>
</protein>
<comment type="function">
    <text evidence="1">Catalyzes the attachment of L-aspartate to tRNA(Asp) in a two-step reaction: L-aspartate is first activated by ATP to form Asp-AMP and then transferred to the acceptor end of tRNA(Asp).</text>
</comment>
<comment type="catalytic activity">
    <reaction evidence="1">
        <text>tRNA(Asp) + L-aspartate + ATP = L-aspartyl-tRNA(Asp) + AMP + diphosphate</text>
        <dbReference type="Rhea" id="RHEA:19649"/>
        <dbReference type="Rhea" id="RHEA-COMP:9660"/>
        <dbReference type="Rhea" id="RHEA-COMP:9678"/>
        <dbReference type="ChEBI" id="CHEBI:29991"/>
        <dbReference type="ChEBI" id="CHEBI:30616"/>
        <dbReference type="ChEBI" id="CHEBI:33019"/>
        <dbReference type="ChEBI" id="CHEBI:78442"/>
        <dbReference type="ChEBI" id="CHEBI:78516"/>
        <dbReference type="ChEBI" id="CHEBI:456215"/>
        <dbReference type="EC" id="6.1.1.12"/>
    </reaction>
</comment>
<comment type="subunit">
    <text evidence="1">Homodimer.</text>
</comment>
<comment type="subcellular location">
    <subcellularLocation>
        <location evidence="1">Cytoplasm</location>
    </subcellularLocation>
</comment>
<comment type="similarity">
    <text evidence="1">Belongs to the class-II aminoacyl-tRNA synthetase family. Type 1 subfamily.</text>
</comment>
<comment type="sequence caution" evidence="2">
    <conflict type="erroneous initiation">
        <sequence resource="EMBL-CDS" id="AAX72932"/>
    </conflict>
    <text>Extended N-terminus.</text>
</comment>
<accession>Q48QS8</accession>